<feature type="chain" id="PRO_1000051695" description="Large ribosomal subunit protein eL39">
    <location>
        <begin position="1"/>
        <end position="51"/>
    </location>
</feature>
<keyword id="KW-0687">Ribonucleoprotein</keyword>
<keyword id="KW-0689">Ribosomal protein</keyword>
<reference key="1">
    <citation type="submission" date="2006-12" db="EMBL/GenBank/DDBJ databases">
        <title>Complete sequence of Pyrobaculum islandicum DSM 4184.</title>
        <authorList>
            <person name="Copeland A."/>
            <person name="Lucas S."/>
            <person name="Lapidus A."/>
            <person name="Barry K."/>
            <person name="Detter J.C."/>
            <person name="Glavina del Rio T."/>
            <person name="Dalin E."/>
            <person name="Tice H."/>
            <person name="Pitluck S."/>
            <person name="Meincke L."/>
            <person name="Brettin T."/>
            <person name="Bruce D."/>
            <person name="Han C."/>
            <person name="Tapia R."/>
            <person name="Gilna P."/>
            <person name="Schmutz J."/>
            <person name="Larimer F."/>
            <person name="Land M."/>
            <person name="Hauser L."/>
            <person name="Kyrpides N."/>
            <person name="Mikhailova N."/>
            <person name="Cozen A.E."/>
            <person name="Fitz-Gibbon S.T."/>
            <person name="House C.H."/>
            <person name="Saltikov C."/>
            <person name="Lowe T."/>
            <person name="Richardson P."/>
        </authorList>
    </citation>
    <scope>NUCLEOTIDE SEQUENCE [LARGE SCALE GENOMIC DNA]</scope>
    <source>
        <strain>DSM 4184 / JCM 9189 / GEO3</strain>
    </source>
</reference>
<organism>
    <name type="scientific">Pyrobaculum islandicum (strain DSM 4184 / JCM 9189 / GEO3)</name>
    <dbReference type="NCBI Taxonomy" id="384616"/>
    <lineage>
        <taxon>Archaea</taxon>
        <taxon>Thermoproteota</taxon>
        <taxon>Thermoprotei</taxon>
        <taxon>Thermoproteales</taxon>
        <taxon>Thermoproteaceae</taxon>
        <taxon>Pyrobaculum</taxon>
    </lineage>
</organism>
<sequence>MARNKPLGKKLRLAAALKSNRNPPVWVVVKTKRRVTRSPTRRHWRRTKLKA</sequence>
<dbReference type="EMBL" id="CP000504">
    <property type="protein sequence ID" value="ABL87620.1"/>
    <property type="molecule type" value="Genomic_DNA"/>
</dbReference>
<dbReference type="RefSeq" id="WP_011762197.1">
    <property type="nucleotide sequence ID" value="NC_008701.1"/>
</dbReference>
<dbReference type="SMR" id="A1RRN8"/>
<dbReference type="STRING" id="384616.Pisl_0442"/>
<dbReference type="GeneID" id="4618147"/>
<dbReference type="KEGG" id="pis:Pisl_0442"/>
<dbReference type="eggNOG" id="arCOG04177">
    <property type="taxonomic scope" value="Archaea"/>
</dbReference>
<dbReference type="HOGENOM" id="CLU_181948_4_0_2"/>
<dbReference type="Proteomes" id="UP000002595">
    <property type="component" value="Chromosome"/>
</dbReference>
<dbReference type="GO" id="GO:1990904">
    <property type="term" value="C:ribonucleoprotein complex"/>
    <property type="evidence" value="ECO:0007669"/>
    <property type="project" value="UniProtKB-KW"/>
</dbReference>
<dbReference type="GO" id="GO:0005840">
    <property type="term" value="C:ribosome"/>
    <property type="evidence" value="ECO:0007669"/>
    <property type="project" value="UniProtKB-KW"/>
</dbReference>
<dbReference type="GO" id="GO:0003735">
    <property type="term" value="F:structural constituent of ribosome"/>
    <property type="evidence" value="ECO:0007669"/>
    <property type="project" value="InterPro"/>
</dbReference>
<dbReference type="GO" id="GO:0006412">
    <property type="term" value="P:translation"/>
    <property type="evidence" value="ECO:0007669"/>
    <property type="project" value="UniProtKB-UniRule"/>
</dbReference>
<dbReference type="FunFam" id="1.10.1620.10:FF:000001">
    <property type="entry name" value="60S ribosomal protein-like L39"/>
    <property type="match status" value="1"/>
</dbReference>
<dbReference type="Gene3D" id="1.10.1620.10">
    <property type="entry name" value="Ribosomal protein L39e"/>
    <property type="match status" value="1"/>
</dbReference>
<dbReference type="HAMAP" id="MF_00629">
    <property type="entry name" value="Ribosomal_eL39"/>
    <property type="match status" value="1"/>
</dbReference>
<dbReference type="InterPro" id="IPR000077">
    <property type="entry name" value="Ribosomal_eL39"/>
</dbReference>
<dbReference type="InterPro" id="IPR020083">
    <property type="entry name" value="Ribosomal_eL39_CS"/>
</dbReference>
<dbReference type="InterPro" id="IPR023626">
    <property type="entry name" value="Ribosomal_eL39_dom_sf"/>
</dbReference>
<dbReference type="NCBIfam" id="NF002316">
    <property type="entry name" value="PRK01242.1"/>
    <property type="match status" value="1"/>
</dbReference>
<dbReference type="Pfam" id="PF00832">
    <property type="entry name" value="Ribosomal_L39"/>
    <property type="match status" value="1"/>
</dbReference>
<dbReference type="SUPFAM" id="SSF48662">
    <property type="entry name" value="Ribosomal protein L39e"/>
    <property type="match status" value="1"/>
</dbReference>
<dbReference type="PROSITE" id="PS00051">
    <property type="entry name" value="RIBOSOMAL_L39E"/>
    <property type="match status" value="1"/>
</dbReference>
<gene>
    <name evidence="1" type="primary">rpl39e</name>
    <name type="ordered locus">Pisl_0442</name>
</gene>
<evidence type="ECO:0000255" key="1">
    <source>
        <dbReference type="HAMAP-Rule" id="MF_00629"/>
    </source>
</evidence>
<evidence type="ECO:0000305" key="2"/>
<accession>A1RRN8</accession>
<comment type="similarity">
    <text evidence="1">Belongs to the eukaryotic ribosomal protein eL39 family.</text>
</comment>
<name>RL39_PYRIL</name>
<proteinExistence type="inferred from homology"/>
<protein>
    <recommendedName>
        <fullName evidence="1">Large ribosomal subunit protein eL39</fullName>
    </recommendedName>
    <alternativeName>
        <fullName evidence="2">50S ribosomal protein L39e</fullName>
    </alternativeName>
</protein>